<comment type="function">
    <text evidence="1">Involved in the gluconeogenesis. Catalyzes stereospecifically the conversion of dihydroxyacetone phosphate (DHAP) to D-glyceraldehyde-3-phosphate (G3P).</text>
</comment>
<comment type="catalytic activity">
    <reaction evidence="1">
        <text>D-glyceraldehyde 3-phosphate = dihydroxyacetone phosphate</text>
        <dbReference type="Rhea" id="RHEA:18585"/>
        <dbReference type="ChEBI" id="CHEBI:57642"/>
        <dbReference type="ChEBI" id="CHEBI:59776"/>
        <dbReference type="EC" id="5.3.1.1"/>
    </reaction>
</comment>
<comment type="pathway">
    <text evidence="1">Carbohydrate biosynthesis; gluconeogenesis.</text>
</comment>
<comment type="pathway">
    <text evidence="1">Carbohydrate degradation; glycolysis; D-glyceraldehyde 3-phosphate from glycerone phosphate: step 1/1.</text>
</comment>
<comment type="subunit">
    <text evidence="1">Homodimer.</text>
</comment>
<comment type="subcellular location">
    <subcellularLocation>
        <location evidence="1">Cytoplasm</location>
    </subcellularLocation>
</comment>
<comment type="similarity">
    <text evidence="1">Belongs to the triosephosphate isomerase family.</text>
</comment>
<reference key="1">
    <citation type="journal article" date="2004" name="Nucleic Acids Res.">
        <title>Genome sequence of Symbiobacterium thermophilum, an uncultivable bacterium that depends on microbial commensalism.</title>
        <authorList>
            <person name="Ueda K."/>
            <person name="Yamashita A."/>
            <person name="Ishikawa J."/>
            <person name="Shimada M."/>
            <person name="Watsuji T."/>
            <person name="Morimura K."/>
            <person name="Ikeda H."/>
            <person name="Hattori M."/>
            <person name="Beppu T."/>
        </authorList>
    </citation>
    <scope>NUCLEOTIDE SEQUENCE [LARGE SCALE GENOMIC DNA]</scope>
    <source>
        <strain>DSM 24528 / JCM 14929 / IAM 14863 / T</strain>
    </source>
</reference>
<name>TPIS_SYMTH</name>
<organism>
    <name type="scientific">Symbiobacterium thermophilum (strain DSM 24528 / JCM 14929 / IAM 14863 / T)</name>
    <dbReference type="NCBI Taxonomy" id="292459"/>
    <lineage>
        <taxon>Bacteria</taxon>
        <taxon>Bacillati</taxon>
        <taxon>Bacillota</taxon>
        <taxon>Clostridia</taxon>
        <taxon>Eubacteriales</taxon>
        <taxon>Symbiobacteriaceae</taxon>
        <taxon>Symbiobacterium</taxon>
    </lineage>
</organism>
<gene>
    <name evidence="1" type="primary">tpiA</name>
    <name type="ordered locus">STH244</name>
</gene>
<evidence type="ECO:0000255" key="1">
    <source>
        <dbReference type="HAMAP-Rule" id="MF_00147"/>
    </source>
</evidence>
<protein>
    <recommendedName>
        <fullName evidence="1">Triosephosphate isomerase</fullName>
        <shortName evidence="1">TIM</shortName>
        <shortName evidence="1">TPI</shortName>
        <ecNumber evidence="1">5.3.1.1</ecNumber>
    </recommendedName>
    <alternativeName>
        <fullName evidence="1">Triose-phosphate isomerase</fullName>
    </alternativeName>
</protein>
<dbReference type="EC" id="5.3.1.1" evidence="1"/>
<dbReference type="EMBL" id="AP006840">
    <property type="protein sequence ID" value="BAD39229.1"/>
    <property type="molecule type" value="Genomic_DNA"/>
</dbReference>
<dbReference type="RefSeq" id="WP_011194379.1">
    <property type="nucleotide sequence ID" value="NC_006177.1"/>
</dbReference>
<dbReference type="SMR" id="Q67SW4"/>
<dbReference type="STRING" id="292459.STH244"/>
<dbReference type="KEGG" id="sth:STH244"/>
<dbReference type="eggNOG" id="COG0149">
    <property type="taxonomic scope" value="Bacteria"/>
</dbReference>
<dbReference type="HOGENOM" id="CLU_024251_2_3_9"/>
<dbReference type="OrthoDB" id="9809429at2"/>
<dbReference type="UniPathway" id="UPA00109">
    <property type="reaction ID" value="UER00189"/>
</dbReference>
<dbReference type="UniPathway" id="UPA00138"/>
<dbReference type="Proteomes" id="UP000000417">
    <property type="component" value="Chromosome"/>
</dbReference>
<dbReference type="GO" id="GO:0005829">
    <property type="term" value="C:cytosol"/>
    <property type="evidence" value="ECO:0007669"/>
    <property type="project" value="TreeGrafter"/>
</dbReference>
<dbReference type="GO" id="GO:0004807">
    <property type="term" value="F:triose-phosphate isomerase activity"/>
    <property type="evidence" value="ECO:0007669"/>
    <property type="project" value="UniProtKB-UniRule"/>
</dbReference>
<dbReference type="GO" id="GO:0006094">
    <property type="term" value="P:gluconeogenesis"/>
    <property type="evidence" value="ECO:0007669"/>
    <property type="project" value="UniProtKB-UniRule"/>
</dbReference>
<dbReference type="GO" id="GO:0046166">
    <property type="term" value="P:glyceraldehyde-3-phosphate biosynthetic process"/>
    <property type="evidence" value="ECO:0007669"/>
    <property type="project" value="TreeGrafter"/>
</dbReference>
<dbReference type="GO" id="GO:0019563">
    <property type="term" value="P:glycerol catabolic process"/>
    <property type="evidence" value="ECO:0007669"/>
    <property type="project" value="TreeGrafter"/>
</dbReference>
<dbReference type="GO" id="GO:0006096">
    <property type="term" value="P:glycolytic process"/>
    <property type="evidence" value="ECO:0007669"/>
    <property type="project" value="UniProtKB-UniRule"/>
</dbReference>
<dbReference type="CDD" id="cd00311">
    <property type="entry name" value="TIM"/>
    <property type="match status" value="1"/>
</dbReference>
<dbReference type="FunFam" id="3.20.20.70:FF:000016">
    <property type="entry name" value="Triosephosphate isomerase"/>
    <property type="match status" value="1"/>
</dbReference>
<dbReference type="Gene3D" id="3.20.20.70">
    <property type="entry name" value="Aldolase class I"/>
    <property type="match status" value="1"/>
</dbReference>
<dbReference type="HAMAP" id="MF_00147_B">
    <property type="entry name" value="TIM_B"/>
    <property type="match status" value="1"/>
</dbReference>
<dbReference type="InterPro" id="IPR013785">
    <property type="entry name" value="Aldolase_TIM"/>
</dbReference>
<dbReference type="InterPro" id="IPR035990">
    <property type="entry name" value="TIM_sf"/>
</dbReference>
<dbReference type="InterPro" id="IPR022896">
    <property type="entry name" value="TrioseP_Isoase_bac/euk"/>
</dbReference>
<dbReference type="InterPro" id="IPR000652">
    <property type="entry name" value="Triosephosphate_isomerase"/>
</dbReference>
<dbReference type="InterPro" id="IPR020861">
    <property type="entry name" value="Triosephosphate_isomerase_AS"/>
</dbReference>
<dbReference type="NCBIfam" id="TIGR00419">
    <property type="entry name" value="tim"/>
    <property type="match status" value="1"/>
</dbReference>
<dbReference type="PANTHER" id="PTHR21139">
    <property type="entry name" value="TRIOSEPHOSPHATE ISOMERASE"/>
    <property type="match status" value="1"/>
</dbReference>
<dbReference type="PANTHER" id="PTHR21139:SF42">
    <property type="entry name" value="TRIOSEPHOSPHATE ISOMERASE"/>
    <property type="match status" value="1"/>
</dbReference>
<dbReference type="Pfam" id="PF00121">
    <property type="entry name" value="TIM"/>
    <property type="match status" value="1"/>
</dbReference>
<dbReference type="SUPFAM" id="SSF51351">
    <property type="entry name" value="Triosephosphate isomerase (TIM)"/>
    <property type="match status" value="1"/>
</dbReference>
<dbReference type="PROSITE" id="PS00171">
    <property type="entry name" value="TIM_1"/>
    <property type="match status" value="1"/>
</dbReference>
<dbReference type="PROSITE" id="PS51440">
    <property type="entry name" value="TIM_2"/>
    <property type="match status" value="1"/>
</dbReference>
<sequence length="256" mass="26664">MRTPIVAANWKMHKTQPEARQFLADFLPREAGMSGVEIVICPPFTALAAVAGGLTGTRVGLGAQNMSDKPSGAFTGEVSGAMLVDAGCRYVILGHSERRRLFGESDEVVGAKVRAALQHGLIPILCIGETLEEQQAGEADAVNRRQLLAGLEGLTPEQVANLVIAYEPVWAIGTGRNCDPGDAQARIAAVRAVVAEAFGPEAAARVRIQYGGSVKPENMAAYMAQPDIDGALVGGASLDPTSFAAICAAAAEARAR</sequence>
<keyword id="KW-0963">Cytoplasm</keyword>
<keyword id="KW-0312">Gluconeogenesis</keyword>
<keyword id="KW-0324">Glycolysis</keyword>
<keyword id="KW-0413">Isomerase</keyword>
<keyword id="KW-1185">Reference proteome</keyword>
<accession>Q67SW4</accession>
<feature type="chain" id="PRO_0000307583" description="Triosephosphate isomerase">
    <location>
        <begin position="1"/>
        <end position="256"/>
    </location>
</feature>
<feature type="active site" description="Electrophile" evidence="1">
    <location>
        <position position="95"/>
    </location>
</feature>
<feature type="active site" description="Proton acceptor" evidence="1">
    <location>
        <position position="167"/>
    </location>
</feature>
<feature type="binding site" evidence="1">
    <location>
        <begin position="9"/>
        <end position="11"/>
    </location>
    <ligand>
        <name>substrate</name>
    </ligand>
</feature>
<feature type="binding site" evidence="1">
    <location>
        <position position="173"/>
    </location>
    <ligand>
        <name>substrate</name>
    </ligand>
</feature>
<feature type="binding site" evidence="1">
    <location>
        <position position="213"/>
    </location>
    <ligand>
        <name>substrate</name>
    </ligand>
</feature>
<feature type="binding site" evidence="1">
    <location>
        <begin position="234"/>
        <end position="235"/>
    </location>
    <ligand>
        <name>substrate</name>
    </ligand>
</feature>
<proteinExistence type="inferred from homology"/>